<protein>
    <recommendedName>
        <fullName>Putative transposase InsN for insertion sequence element IS911A</fullName>
    </recommendedName>
</protein>
<gene>
    <name type="primary">insN1</name>
    <name type="ordered locus">b0255</name>
    <name type="ordered locus">JW5024</name>
</gene>
<reference key="1">
    <citation type="submission" date="1996-02" db="EMBL/GenBank/DDBJ databases">
        <title>Systematic sequencing of the Escherichia coli genome: analysis of the 4.0 - 6.0 min (189,987 - 281,416bp) region.</title>
        <authorList>
            <person name="Takemoto K."/>
            <person name="Mori H."/>
            <person name="Murayama N."/>
            <person name="Kataoka K."/>
            <person name="Yano M."/>
            <person name="Itoh T."/>
            <person name="Yamamoto Y."/>
            <person name="Inokuchi H."/>
            <person name="Miki T."/>
            <person name="Hatada E."/>
            <person name="Fukuda R."/>
            <person name="Ichihara S."/>
            <person name="Mizuno T."/>
            <person name="Makino K."/>
            <person name="Nakata A."/>
            <person name="Yura T."/>
            <person name="Sampei G."/>
            <person name="Mizobuchi K."/>
        </authorList>
    </citation>
    <scope>NUCLEOTIDE SEQUENCE [LARGE SCALE GENOMIC DNA]</scope>
    <source>
        <strain>K12 / W3110 / ATCC 27325 / DSM 5911</strain>
    </source>
</reference>
<reference key="2">
    <citation type="submission" date="1997-01" db="EMBL/GenBank/DDBJ databases">
        <title>Sequence of minutes 4-25 of Escherichia coli.</title>
        <authorList>
            <person name="Chung E."/>
            <person name="Allen E."/>
            <person name="Araujo R."/>
            <person name="Aparicio A.M."/>
            <person name="Davis K."/>
            <person name="Duncan M."/>
            <person name="Federspiel N."/>
            <person name="Hyman R."/>
            <person name="Kalman S."/>
            <person name="Komp C."/>
            <person name="Kurdi O."/>
            <person name="Lew H."/>
            <person name="Lin D."/>
            <person name="Namath A."/>
            <person name="Oefner P."/>
            <person name="Roberts D."/>
            <person name="Schramm S."/>
            <person name="Davis R.W."/>
        </authorList>
    </citation>
    <scope>NUCLEOTIDE SEQUENCE [LARGE SCALE GENOMIC DNA]</scope>
    <source>
        <strain>K12 / MG1655 / ATCC 47076</strain>
    </source>
</reference>
<reference key="3">
    <citation type="journal article" date="1997" name="Science">
        <title>The complete genome sequence of Escherichia coli K-12.</title>
        <authorList>
            <person name="Blattner F.R."/>
            <person name="Plunkett G. III"/>
            <person name="Bloch C.A."/>
            <person name="Perna N.T."/>
            <person name="Burland V."/>
            <person name="Riley M."/>
            <person name="Collado-Vides J."/>
            <person name="Glasner J.D."/>
            <person name="Rode C.K."/>
            <person name="Mayhew G.F."/>
            <person name="Gregor J."/>
            <person name="Davis N.W."/>
            <person name="Kirkpatrick H.A."/>
            <person name="Goeden M.A."/>
            <person name="Rose D.J."/>
            <person name="Mau B."/>
            <person name="Shao Y."/>
        </authorList>
    </citation>
    <scope>NUCLEOTIDE SEQUENCE [LARGE SCALE GENOMIC DNA]</scope>
    <source>
        <strain>K12 / MG1655 / ATCC 47076</strain>
    </source>
</reference>
<reference key="4">
    <citation type="journal article" date="2006" name="Mol. Syst. Biol.">
        <title>Highly accurate genome sequences of Escherichia coli K-12 strains MG1655 and W3110.</title>
        <authorList>
            <person name="Hayashi K."/>
            <person name="Morooka N."/>
            <person name="Yamamoto Y."/>
            <person name="Fujita K."/>
            <person name="Isono K."/>
            <person name="Choi S."/>
            <person name="Ohtsubo E."/>
            <person name="Baba T."/>
            <person name="Wanner B.L."/>
            <person name="Mori H."/>
            <person name="Horiuchi T."/>
        </authorList>
    </citation>
    <scope>NUCLEOTIDE SEQUENCE [LARGE SCALE GENOMIC DNA]</scope>
    <source>
        <strain>K12 / W3110 / ATCC 27325 / DSM 5911</strain>
    </source>
</reference>
<keyword id="KW-0233">DNA recombination</keyword>
<keyword id="KW-0238">DNA-binding</keyword>
<keyword id="KW-1185">Reference proteome</keyword>
<keyword id="KW-0814">Transposable element</keyword>
<keyword id="KW-0815">Transposition</keyword>
<organism>
    <name type="scientific">Escherichia coli (strain K12)</name>
    <dbReference type="NCBI Taxonomy" id="83333"/>
    <lineage>
        <taxon>Bacteria</taxon>
        <taxon>Pseudomonadati</taxon>
        <taxon>Pseudomonadota</taxon>
        <taxon>Gammaproteobacteria</taxon>
        <taxon>Enterobacterales</taxon>
        <taxon>Enterobacteriaceae</taxon>
        <taxon>Escherichia</taxon>
    </lineage>
</organism>
<proteinExistence type="uncertain"/>
<dbReference type="EMBL" id="U70214">
    <property type="protein sequence ID" value="AAB08674.1"/>
    <property type="status" value="ALT_INIT"/>
    <property type="molecule type" value="Genomic_DNA"/>
</dbReference>
<dbReference type="EMBL" id="U00096">
    <property type="status" value="NOT_ANNOTATED_CDS"/>
    <property type="molecule type" value="Genomic_DNA"/>
</dbReference>
<dbReference type="EMBL" id="AP009048">
    <property type="protein sequence ID" value="BAA77925.1"/>
    <property type="molecule type" value="Genomic_DNA"/>
</dbReference>
<dbReference type="PIR" id="G64750">
    <property type="entry name" value="G64750"/>
</dbReference>
<dbReference type="SMR" id="P75679"/>
<dbReference type="BioGRID" id="4262797">
    <property type="interactions" value="1"/>
</dbReference>
<dbReference type="FunCoup" id="P75679">
    <property type="interactions" value="38"/>
</dbReference>
<dbReference type="IntAct" id="P75679">
    <property type="interactions" value="68"/>
</dbReference>
<dbReference type="KEGG" id="ecj:JW5024"/>
<dbReference type="EchoBASE" id="EB4702"/>
<dbReference type="eggNOG" id="COG2963">
    <property type="taxonomic scope" value="Bacteria"/>
</dbReference>
<dbReference type="HOGENOM" id="CLU_027402_33_9_6"/>
<dbReference type="InParanoid" id="P75679"/>
<dbReference type="PhylomeDB" id="P75679"/>
<dbReference type="PRO" id="PR:P75679"/>
<dbReference type="Proteomes" id="UP000000625">
    <property type="component" value="Chromosome"/>
</dbReference>
<dbReference type="GO" id="GO:0003677">
    <property type="term" value="F:DNA binding"/>
    <property type="evidence" value="ECO:0007669"/>
    <property type="project" value="UniProtKB-KW"/>
</dbReference>
<dbReference type="GO" id="GO:0004803">
    <property type="term" value="F:transposase activity"/>
    <property type="evidence" value="ECO:0007669"/>
    <property type="project" value="InterPro"/>
</dbReference>
<dbReference type="GO" id="GO:0006313">
    <property type="term" value="P:DNA transposition"/>
    <property type="evidence" value="ECO:0007669"/>
    <property type="project" value="InterPro"/>
</dbReference>
<dbReference type="Gene3D" id="1.10.10.60">
    <property type="entry name" value="Homeodomain-like"/>
    <property type="match status" value="1"/>
</dbReference>
<dbReference type="InterPro" id="IPR009057">
    <property type="entry name" value="Homeodomain-like_sf"/>
</dbReference>
<dbReference type="InterPro" id="IPR051839">
    <property type="entry name" value="RD_transcriptional_regulator"/>
</dbReference>
<dbReference type="InterPro" id="IPR002514">
    <property type="entry name" value="Transposase_8"/>
</dbReference>
<dbReference type="PANTHER" id="PTHR33215">
    <property type="entry name" value="PROTEIN DISTAL ANTENNA"/>
    <property type="match status" value="1"/>
</dbReference>
<dbReference type="PANTHER" id="PTHR33215:SF12">
    <property type="entry name" value="TRANSPOSASE INSN FOR INSERTION SEQUENCE ELEMENT IS911A-RELATED"/>
    <property type="match status" value="1"/>
</dbReference>
<dbReference type="Pfam" id="PF01527">
    <property type="entry name" value="HTH_Tnp_1"/>
    <property type="match status" value="1"/>
</dbReference>
<dbReference type="SUPFAM" id="SSF46689">
    <property type="entry name" value="Homeodomain-like"/>
    <property type="match status" value="1"/>
</dbReference>
<feature type="chain" id="PRO_0000075421" description="Putative transposase InsN for insertion sequence element IS911A">
    <location>
        <begin position="1"/>
        <end position="134"/>
    </location>
</feature>
<sequence length="134" mass="15250">MICSPQNNTGVIMKKRNFSAEFKRESAQLVVDQNYTVADAASAMDVGLSTMTRWVKQLRDERQGKTPKASPITPEQIEIRELRKKLQRIEMENEILKKATVDSIGQRNSYVKTWGCGGFLNETNIYSRGKSLCF</sequence>
<name>INSN1_ECOLI</name>
<evidence type="ECO:0000305" key="1"/>
<comment type="function">
    <text>Involved in the transposition of the insertion sequence IS911.</text>
</comment>
<comment type="similarity">
    <text evidence="1">Belongs to the transposase 8 family.</text>
</comment>
<comment type="caution">
    <text evidence="1">Could be the product of a pseudogene. Is missing C-terminal sequences compared to its orthologs.</text>
</comment>
<comment type="sequence caution" evidence="1">
    <conflict type="erroneous initiation">
        <sequence resource="EMBL-CDS" id="AAB08674"/>
    </conflict>
    <text>Truncated N-terminus.</text>
</comment>
<accession>P75679</accession>
<accession>P71288</accession>